<keyword id="KW-0903">Direct protein sequencing</keyword>
<keyword id="KW-0378">Hydrolase</keyword>
<keyword id="KW-0479">Metal-binding</keyword>
<keyword id="KW-1185">Reference proteome</keyword>
<gene>
    <name evidence="6" type="primary">glpQ2</name>
    <name evidence="6" type="ordered locus">Rv0317c</name>
</gene>
<feature type="initiator methionine" description="Removed" evidence="3">
    <location>
        <position position="1"/>
    </location>
</feature>
<feature type="chain" id="PRO_0000455760" description="Probable glycerophosphodiester phosphodiesterase 2">
    <location>
        <begin position="2"/>
        <end position="264"/>
    </location>
</feature>
<feature type="domain" description="GP-PDE" evidence="2">
    <location>
        <begin position="17"/>
        <end position="255"/>
    </location>
</feature>
<feature type="active site" description="Proton acceptor" evidence="1">
    <location>
        <position position="22"/>
    </location>
</feature>
<feature type="active site" description="Proton donor" evidence="1">
    <location>
        <position position="65"/>
    </location>
</feature>
<feature type="binding site" evidence="2">
    <location>
        <position position="50"/>
    </location>
    <ligand>
        <name>a divalent metal cation</name>
        <dbReference type="ChEBI" id="CHEBI:60240"/>
    </ligand>
</feature>
<feature type="binding site" evidence="2">
    <location>
        <position position="52"/>
    </location>
    <ligand>
        <name>a divalent metal cation</name>
        <dbReference type="ChEBI" id="CHEBI:60240"/>
    </ligand>
</feature>
<feature type="binding site" evidence="2">
    <location>
        <position position="65"/>
    </location>
    <ligand>
        <name>a divalent metal cation</name>
        <dbReference type="ChEBI" id="CHEBI:60240"/>
    </ligand>
</feature>
<proteinExistence type="evidence at protein level"/>
<name>GLPQ2_MYCTU</name>
<evidence type="ECO:0000250" key="1">
    <source>
        <dbReference type="UniProtKB" id="Q8RB32"/>
    </source>
</evidence>
<evidence type="ECO:0000255" key="2">
    <source>
        <dbReference type="PROSITE-ProRule" id="PRU01041"/>
    </source>
</evidence>
<evidence type="ECO:0000269" key="3">
    <source>
    </source>
</evidence>
<evidence type="ECO:0000303" key="4">
    <source>
    </source>
</evidence>
<evidence type="ECO:0000305" key="5"/>
<evidence type="ECO:0000312" key="6">
    <source>
        <dbReference type="EMBL" id="CCP43047.1"/>
    </source>
</evidence>
<protein>
    <recommendedName>
        <fullName evidence="4">Probable glycerophosphodiester phosphodiesterase 2</fullName>
        <shortName>Glycerophosphoryl diester phosphodiesterase 2</shortName>
        <ecNumber evidence="5">3.1.4.46</ecNumber>
    </recommendedName>
</protein>
<accession>O07244</accession>
<accession>F2GMB9</accession>
<accession>I6Y3H4</accession>
<accession>L0T6B1</accession>
<sequence length="264" mass="29003">MSDGGAPTVEFLRHGGRIAMAHRGFTSFRLPMNSMGAFQEAAKLGFRYIETDVRATRDGVAVILHDRRLAPGVGLSGAVDRLDWRDVRKAQLGAGQSIPTLEDLLTALPDMRVNIDIKAASAIEPTVNVIERCNAHNRVLIGSFSERRRRRALRLLTKRVASSAGTGALLAWLTARPLGSRAYAWRMMRDIDCVQLPSRLGGVPVITPARVRGFHAAGRQVHAWTVDEPDVMHTLLDMDVDGIITDRADLLRDVLIARGEWDGA</sequence>
<dbReference type="EC" id="3.1.4.46" evidence="5"/>
<dbReference type="EMBL" id="AL123456">
    <property type="protein sequence ID" value="CCP43047.1"/>
    <property type="status" value="ALT_INIT"/>
    <property type="molecule type" value="Genomic_DNA"/>
</dbReference>
<dbReference type="RefSeq" id="NP_214831.1">
    <property type="nucleotide sequence ID" value="NC_000962.3"/>
</dbReference>
<dbReference type="SMR" id="O07244"/>
<dbReference type="FunCoup" id="O07244">
    <property type="interactions" value="18"/>
</dbReference>
<dbReference type="STRING" id="83332.Rv0317c"/>
<dbReference type="PaxDb" id="83332-Rv0317c"/>
<dbReference type="DNASU" id="886559"/>
<dbReference type="GeneID" id="886559"/>
<dbReference type="KEGG" id="mtu:Rv0317c"/>
<dbReference type="PATRIC" id="fig|83332.111.peg.353"/>
<dbReference type="TubercuList" id="Rv0317c"/>
<dbReference type="eggNOG" id="COG0584">
    <property type="taxonomic scope" value="Bacteria"/>
</dbReference>
<dbReference type="InParanoid" id="O07244"/>
<dbReference type="OrthoDB" id="384721at2"/>
<dbReference type="PhylomeDB" id="O07244"/>
<dbReference type="Proteomes" id="UP000001584">
    <property type="component" value="Chromosome"/>
</dbReference>
<dbReference type="GO" id="GO:0046872">
    <property type="term" value="F:metal ion binding"/>
    <property type="evidence" value="ECO:0007669"/>
    <property type="project" value="UniProtKB-KW"/>
</dbReference>
<dbReference type="GO" id="GO:0008081">
    <property type="term" value="F:phosphoric diester hydrolase activity"/>
    <property type="evidence" value="ECO:0007669"/>
    <property type="project" value="InterPro"/>
</dbReference>
<dbReference type="GO" id="GO:0006629">
    <property type="term" value="P:lipid metabolic process"/>
    <property type="evidence" value="ECO:0007669"/>
    <property type="project" value="InterPro"/>
</dbReference>
<dbReference type="CDD" id="cd08561">
    <property type="entry name" value="GDPD_cytoplasmic_ScUgpQ2_like"/>
    <property type="match status" value="1"/>
</dbReference>
<dbReference type="Gene3D" id="3.20.20.190">
    <property type="entry name" value="Phosphatidylinositol (PI) phosphodiesterase"/>
    <property type="match status" value="1"/>
</dbReference>
<dbReference type="InterPro" id="IPR030395">
    <property type="entry name" value="GP_PDE_dom"/>
</dbReference>
<dbReference type="InterPro" id="IPR017946">
    <property type="entry name" value="PLC-like_Pdiesterase_TIM-brl"/>
</dbReference>
<dbReference type="PANTHER" id="PTHR43805">
    <property type="entry name" value="GLYCEROPHOSPHORYL DIESTER PHOSPHODIESTERASE"/>
    <property type="match status" value="1"/>
</dbReference>
<dbReference type="PANTHER" id="PTHR43805:SF1">
    <property type="entry name" value="GP-PDE DOMAIN-CONTAINING PROTEIN"/>
    <property type="match status" value="1"/>
</dbReference>
<dbReference type="Pfam" id="PF03009">
    <property type="entry name" value="GDPD"/>
    <property type="match status" value="1"/>
</dbReference>
<dbReference type="SUPFAM" id="SSF51695">
    <property type="entry name" value="PLC-like phosphodiesterases"/>
    <property type="match status" value="1"/>
</dbReference>
<dbReference type="PROSITE" id="PS51704">
    <property type="entry name" value="GP_PDE"/>
    <property type="match status" value="1"/>
</dbReference>
<reference evidence="6" key="1">
    <citation type="journal article" date="1998" name="Nature">
        <title>Deciphering the biology of Mycobacterium tuberculosis from the complete genome sequence.</title>
        <authorList>
            <person name="Cole S.T."/>
            <person name="Brosch R."/>
            <person name="Parkhill J."/>
            <person name="Garnier T."/>
            <person name="Churcher C.M."/>
            <person name="Harris D.E."/>
            <person name="Gordon S.V."/>
            <person name="Eiglmeier K."/>
            <person name="Gas S."/>
            <person name="Barry C.E. III"/>
            <person name="Tekaia F."/>
            <person name="Badcock K."/>
            <person name="Basham D."/>
            <person name="Brown D."/>
            <person name="Chillingworth T."/>
            <person name="Connor R."/>
            <person name="Davies R.M."/>
            <person name="Devlin K."/>
            <person name="Feltwell T."/>
            <person name="Gentles S."/>
            <person name="Hamlin N."/>
            <person name="Holroyd S."/>
            <person name="Hornsby T."/>
            <person name="Jagels K."/>
            <person name="Krogh A."/>
            <person name="McLean J."/>
            <person name="Moule S."/>
            <person name="Murphy L.D."/>
            <person name="Oliver S."/>
            <person name="Osborne J."/>
            <person name="Quail M.A."/>
            <person name="Rajandream M.A."/>
            <person name="Rogers J."/>
            <person name="Rutter S."/>
            <person name="Seeger K."/>
            <person name="Skelton S."/>
            <person name="Squares S."/>
            <person name="Squares R."/>
            <person name="Sulston J.E."/>
            <person name="Taylor K."/>
            <person name="Whitehead S."/>
            <person name="Barrell B.G."/>
        </authorList>
    </citation>
    <scope>NUCLEOTIDE SEQUENCE [LARGE SCALE GENOMIC DNA]</scope>
    <source>
        <strain>ATCC 25618 / H37Rv</strain>
    </source>
</reference>
<reference key="2">
    <citation type="journal article" date="2022" name="Genomics">
        <title>Deep N-terminomics of Mycobacterium tuberculosis H37Rv extensively correct annotated encoding genes.</title>
        <authorList>
            <person name="Shi J."/>
            <person name="Meng S."/>
            <person name="Wan L."/>
            <person name="Zhang Z."/>
            <person name="Jiang S."/>
            <person name="Zhu H."/>
            <person name="Dai E."/>
            <person name="Chang L."/>
            <person name="Gao H."/>
            <person name="Wan K."/>
            <person name="Zhang L."/>
            <person name="Zhao X."/>
            <person name="Liu H."/>
            <person name="Lyu Z."/>
            <person name="Zhang Y."/>
            <person name="Xu P."/>
        </authorList>
    </citation>
    <scope>PROTEIN SEQUENCE OF 2-13</scope>
    <scope>SEQUENCE REVISION TO N-TERMINUS</scope>
    <source>
        <strain>H37Rv</strain>
    </source>
</reference>
<reference key="3">
    <citation type="journal article" date="2011" name="Mol. Cell. Proteomics">
        <title>Proteogenomic analysis of Mycobacterium tuberculosis by high resolution mass spectrometry.</title>
        <authorList>
            <person name="Kelkar D.S."/>
            <person name="Kumar D."/>
            <person name="Kumar P."/>
            <person name="Balakrishnan L."/>
            <person name="Muthusamy B."/>
            <person name="Yadav A.K."/>
            <person name="Shrivastava P."/>
            <person name="Marimuthu A."/>
            <person name="Anand S."/>
            <person name="Sundaram H."/>
            <person name="Kingsbury R."/>
            <person name="Harsha H.C."/>
            <person name="Nair B."/>
            <person name="Prasad T.S."/>
            <person name="Chauhan D.S."/>
            <person name="Katoch K."/>
            <person name="Katoch V.M."/>
            <person name="Kumar P."/>
            <person name="Chaerkady R."/>
            <person name="Ramachandran S."/>
            <person name="Dash D."/>
            <person name="Pandey A."/>
        </authorList>
    </citation>
    <scope>IDENTIFICATION BY MASS SPECTROMETRY [LARGE SCALE ANALYSIS]</scope>
    <source>
        <strain>ATCC 25618 / H37Rv</strain>
    </source>
</reference>
<comment type="function">
    <text evidence="5">Glycerophosphodiester phosphodiesterase hydrolyzes glycerophosphodiesters into glycerol-3-phosphate (G3P) and the corresponding alcohol.</text>
</comment>
<comment type="catalytic activity">
    <reaction evidence="5">
        <text>a sn-glycero-3-phosphodiester + H2O = an alcohol + sn-glycerol 3-phosphate + H(+)</text>
        <dbReference type="Rhea" id="RHEA:12969"/>
        <dbReference type="ChEBI" id="CHEBI:15377"/>
        <dbReference type="ChEBI" id="CHEBI:15378"/>
        <dbReference type="ChEBI" id="CHEBI:30879"/>
        <dbReference type="ChEBI" id="CHEBI:57597"/>
        <dbReference type="ChEBI" id="CHEBI:83408"/>
        <dbReference type="EC" id="3.1.4.46"/>
    </reaction>
</comment>
<comment type="cofactor">
    <cofactor evidence="2">
        <name>a divalent metal cation</name>
        <dbReference type="ChEBI" id="CHEBI:60240"/>
    </cofactor>
</comment>
<comment type="similarity">
    <text evidence="5">Belongs to the glycerophosphoryl diester phosphodiesterase family.</text>
</comment>
<comment type="sequence caution" evidence="3">
    <conflict type="erroneous initiation">
        <sequence resource="EMBL-CDS" id="CCP43047"/>
    </conflict>
    <text>Truncated N-terminus.</text>
</comment>
<organism>
    <name type="scientific">Mycobacterium tuberculosis (strain ATCC 25618 / H37Rv)</name>
    <dbReference type="NCBI Taxonomy" id="83332"/>
    <lineage>
        <taxon>Bacteria</taxon>
        <taxon>Bacillati</taxon>
        <taxon>Actinomycetota</taxon>
        <taxon>Actinomycetes</taxon>
        <taxon>Mycobacteriales</taxon>
        <taxon>Mycobacteriaceae</taxon>
        <taxon>Mycobacterium</taxon>
        <taxon>Mycobacterium tuberculosis complex</taxon>
    </lineage>
</organism>